<comment type="function">
    <text evidence="1">F(1)F(0) ATP synthase produces ATP from ADP in the presence of a proton or sodium gradient. F-type ATPases consist of two structural domains, F(1) containing the extramembraneous catalytic core and F(0) containing the membrane proton channel, linked together by a central stalk and a peripheral stalk. During catalysis, ATP synthesis in the catalytic domain of F(1) is coupled via a rotary mechanism of the central stalk subunits to proton translocation.</text>
</comment>
<comment type="function">
    <text evidence="1">Component of the F(0) channel, it forms part of the peripheral stalk, linking F(1) to F(0).</text>
</comment>
<comment type="subunit">
    <text evidence="1">F-type ATPases have 2 components, F(1) - the catalytic core - and F(0) - the membrane proton channel. F(1) has five subunits: alpha(3), beta(3), gamma(1), delta(1), epsilon(1). F(0) has three main subunits: a(1), b(2) and c(10-14). The alpha and beta chains form an alternating ring which encloses part of the gamma chain. F(1) is attached to F(0) by a central stalk formed by the gamma and epsilon chains, while a peripheral stalk is formed by the delta and b chains.</text>
</comment>
<comment type="subcellular location">
    <subcellularLocation>
        <location evidence="1">Cell inner membrane</location>
        <topology evidence="1">Single-pass membrane protein</topology>
    </subcellularLocation>
</comment>
<comment type="similarity">
    <text evidence="1">Belongs to the ATPase B chain family.</text>
</comment>
<keyword id="KW-0066">ATP synthesis</keyword>
<keyword id="KW-0997">Cell inner membrane</keyword>
<keyword id="KW-1003">Cell membrane</keyword>
<keyword id="KW-0138">CF(0)</keyword>
<keyword id="KW-0375">Hydrogen ion transport</keyword>
<keyword id="KW-0406">Ion transport</keyword>
<keyword id="KW-0472">Membrane</keyword>
<keyword id="KW-0812">Transmembrane</keyword>
<keyword id="KW-1133">Transmembrane helix</keyword>
<keyword id="KW-0813">Transport</keyword>
<name>ATPF_PSYWF</name>
<proteinExistence type="inferred from homology"/>
<gene>
    <name evidence="1" type="primary">atpF</name>
    <name type="ordered locus">PsycPRwf_0189</name>
</gene>
<evidence type="ECO:0000255" key="1">
    <source>
        <dbReference type="HAMAP-Rule" id="MF_01398"/>
    </source>
</evidence>
<dbReference type="EMBL" id="CP000713">
    <property type="protein sequence ID" value="ABQ93148.1"/>
    <property type="molecule type" value="Genomic_DNA"/>
</dbReference>
<dbReference type="SMR" id="A5WBV7"/>
<dbReference type="STRING" id="349106.PsycPRwf_0189"/>
<dbReference type="KEGG" id="prw:PsycPRwf_0189"/>
<dbReference type="eggNOG" id="COG0711">
    <property type="taxonomic scope" value="Bacteria"/>
</dbReference>
<dbReference type="HOGENOM" id="CLU_079215_4_5_6"/>
<dbReference type="GO" id="GO:0005886">
    <property type="term" value="C:plasma membrane"/>
    <property type="evidence" value="ECO:0007669"/>
    <property type="project" value="UniProtKB-SubCell"/>
</dbReference>
<dbReference type="GO" id="GO:0045259">
    <property type="term" value="C:proton-transporting ATP synthase complex"/>
    <property type="evidence" value="ECO:0007669"/>
    <property type="project" value="UniProtKB-KW"/>
</dbReference>
<dbReference type="GO" id="GO:0046933">
    <property type="term" value="F:proton-transporting ATP synthase activity, rotational mechanism"/>
    <property type="evidence" value="ECO:0007669"/>
    <property type="project" value="UniProtKB-UniRule"/>
</dbReference>
<dbReference type="GO" id="GO:0046961">
    <property type="term" value="F:proton-transporting ATPase activity, rotational mechanism"/>
    <property type="evidence" value="ECO:0007669"/>
    <property type="project" value="TreeGrafter"/>
</dbReference>
<dbReference type="CDD" id="cd06503">
    <property type="entry name" value="ATP-synt_Fo_b"/>
    <property type="match status" value="1"/>
</dbReference>
<dbReference type="Gene3D" id="1.20.5.620">
    <property type="entry name" value="F1F0 ATP synthase subunit B, membrane domain"/>
    <property type="match status" value="1"/>
</dbReference>
<dbReference type="HAMAP" id="MF_01398">
    <property type="entry name" value="ATP_synth_b_bprime"/>
    <property type="match status" value="1"/>
</dbReference>
<dbReference type="InterPro" id="IPR028987">
    <property type="entry name" value="ATP_synth_B-like_membr_sf"/>
</dbReference>
<dbReference type="InterPro" id="IPR002146">
    <property type="entry name" value="ATP_synth_b/b'su_bac/chlpt"/>
</dbReference>
<dbReference type="InterPro" id="IPR005864">
    <property type="entry name" value="ATP_synth_F0_bsu_bac"/>
</dbReference>
<dbReference type="InterPro" id="IPR050059">
    <property type="entry name" value="ATP_synthase_B_chain"/>
</dbReference>
<dbReference type="NCBIfam" id="TIGR01144">
    <property type="entry name" value="ATP_synt_b"/>
    <property type="match status" value="1"/>
</dbReference>
<dbReference type="NCBIfam" id="NF004411">
    <property type="entry name" value="PRK05759.1-2"/>
    <property type="match status" value="1"/>
</dbReference>
<dbReference type="PANTHER" id="PTHR33445:SF1">
    <property type="entry name" value="ATP SYNTHASE SUBUNIT B"/>
    <property type="match status" value="1"/>
</dbReference>
<dbReference type="PANTHER" id="PTHR33445">
    <property type="entry name" value="ATP SYNTHASE SUBUNIT B', CHLOROPLASTIC"/>
    <property type="match status" value="1"/>
</dbReference>
<dbReference type="Pfam" id="PF00430">
    <property type="entry name" value="ATP-synt_B"/>
    <property type="match status" value="1"/>
</dbReference>
<dbReference type="SUPFAM" id="SSF81573">
    <property type="entry name" value="F1F0 ATP synthase subunit B, membrane domain"/>
    <property type="match status" value="1"/>
</dbReference>
<feature type="chain" id="PRO_0000368699" description="ATP synthase subunit b">
    <location>
        <begin position="1"/>
        <end position="156"/>
    </location>
</feature>
<feature type="transmembrane region" description="Helical" evidence="1">
    <location>
        <begin position="12"/>
        <end position="32"/>
    </location>
</feature>
<sequence length="156" mass="17058">MNINLTLIGQSIAFAIFVLFCMKFIWPALMGAISERQQKIADGLNAAEKAKADLASAEQSVEQELATAKAKAAALIEQANKSANQLIEEAKAQAQVEGERIRQQARESIDLEINQARESLRTQVSELAVLGAEQILKEKVDQQTHANMLNELAAKL</sequence>
<reference key="1">
    <citation type="submission" date="2007-05" db="EMBL/GenBank/DDBJ databases">
        <title>Complete sequence of chromosome of Psychrobacter sp. PRwf-1.</title>
        <authorList>
            <consortium name="US DOE Joint Genome Institute"/>
            <person name="Copeland A."/>
            <person name="Lucas S."/>
            <person name="Lapidus A."/>
            <person name="Barry K."/>
            <person name="Detter J.C."/>
            <person name="Glavina del Rio T."/>
            <person name="Hammon N."/>
            <person name="Israni S."/>
            <person name="Dalin E."/>
            <person name="Tice H."/>
            <person name="Pitluck S."/>
            <person name="Chain P."/>
            <person name="Malfatti S."/>
            <person name="Shin M."/>
            <person name="Vergez L."/>
            <person name="Schmutz J."/>
            <person name="Larimer F."/>
            <person name="Land M."/>
            <person name="Hauser L."/>
            <person name="Kyrpides N."/>
            <person name="Kim E."/>
            <person name="Tiedje J."/>
            <person name="Richardson P."/>
        </authorList>
    </citation>
    <scope>NUCLEOTIDE SEQUENCE [LARGE SCALE GENOMIC DNA]</scope>
    <source>
        <strain>PRwf-1</strain>
    </source>
</reference>
<accession>A5WBV7</accession>
<protein>
    <recommendedName>
        <fullName evidence="1">ATP synthase subunit b</fullName>
    </recommendedName>
    <alternativeName>
        <fullName evidence="1">ATP synthase F(0) sector subunit b</fullName>
    </alternativeName>
    <alternativeName>
        <fullName evidence="1">ATPase subunit I</fullName>
    </alternativeName>
    <alternativeName>
        <fullName evidence="1">F-type ATPase subunit b</fullName>
        <shortName evidence="1">F-ATPase subunit b</shortName>
    </alternativeName>
</protein>
<organism>
    <name type="scientific">Psychrobacter sp. (strain PRwf-1)</name>
    <dbReference type="NCBI Taxonomy" id="349106"/>
    <lineage>
        <taxon>Bacteria</taxon>
        <taxon>Pseudomonadati</taxon>
        <taxon>Pseudomonadota</taxon>
        <taxon>Gammaproteobacteria</taxon>
        <taxon>Moraxellales</taxon>
        <taxon>Moraxellaceae</taxon>
        <taxon>Psychrobacter</taxon>
    </lineage>
</organism>